<gene>
    <name evidence="1" type="primary">rplK</name>
    <name type="ordered locus">DNO_1286</name>
</gene>
<proteinExistence type="inferred from homology"/>
<name>RL11_DICNV</name>
<dbReference type="EMBL" id="CP000513">
    <property type="protein sequence ID" value="ABQ14097.1"/>
    <property type="molecule type" value="Genomic_DNA"/>
</dbReference>
<dbReference type="RefSeq" id="WP_012031581.1">
    <property type="nucleotide sequence ID" value="NC_009446.1"/>
</dbReference>
<dbReference type="SMR" id="A5EX74"/>
<dbReference type="STRING" id="246195.DNO_1286"/>
<dbReference type="KEGG" id="dno:DNO_1286"/>
<dbReference type="eggNOG" id="COG0080">
    <property type="taxonomic scope" value="Bacteria"/>
</dbReference>
<dbReference type="HOGENOM" id="CLU_074237_2_0_6"/>
<dbReference type="OrthoDB" id="9802408at2"/>
<dbReference type="Proteomes" id="UP000000248">
    <property type="component" value="Chromosome"/>
</dbReference>
<dbReference type="GO" id="GO:0022625">
    <property type="term" value="C:cytosolic large ribosomal subunit"/>
    <property type="evidence" value="ECO:0007669"/>
    <property type="project" value="TreeGrafter"/>
</dbReference>
<dbReference type="GO" id="GO:0070180">
    <property type="term" value="F:large ribosomal subunit rRNA binding"/>
    <property type="evidence" value="ECO:0007669"/>
    <property type="project" value="UniProtKB-UniRule"/>
</dbReference>
<dbReference type="GO" id="GO:0003735">
    <property type="term" value="F:structural constituent of ribosome"/>
    <property type="evidence" value="ECO:0007669"/>
    <property type="project" value="InterPro"/>
</dbReference>
<dbReference type="GO" id="GO:0006412">
    <property type="term" value="P:translation"/>
    <property type="evidence" value="ECO:0007669"/>
    <property type="project" value="UniProtKB-UniRule"/>
</dbReference>
<dbReference type="CDD" id="cd00349">
    <property type="entry name" value="Ribosomal_L11"/>
    <property type="match status" value="1"/>
</dbReference>
<dbReference type="FunFam" id="1.10.10.250:FF:000001">
    <property type="entry name" value="50S ribosomal protein L11"/>
    <property type="match status" value="1"/>
</dbReference>
<dbReference type="FunFam" id="3.30.1550.10:FF:000001">
    <property type="entry name" value="50S ribosomal protein L11"/>
    <property type="match status" value="1"/>
</dbReference>
<dbReference type="Gene3D" id="1.10.10.250">
    <property type="entry name" value="Ribosomal protein L11, C-terminal domain"/>
    <property type="match status" value="1"/>
</dbReference>
<dbReference type="Gene3D" id="3.30.1550.10">
    <property type="entry name" value="Ribosomal protein L11/L12, N-terminal domain"/>
    <property type="match status" value="1"/>
</dbReference>
<dbReference type="HAMAP" id="MF_00736">
    <property type="entry name" value="Ribosomal_uL11"/>
    <property type="match status" value="1"/>
</dbReference>
<dbReference type="InterPro" id="IPR000911">
    <property type="entry name" value="Ribosomal_uL11"/>
</dbReference>
<dbReference type="InterPro" id="IPR006519">
    <property type="entry name" value="Ribosomal_uL11_bac-typ"/>
</dbReference>
<dbReference type="InterPro" id="IPR020783">
    <property type="entry name" value="Ribosomal_uL11_C"/>
</dbReference>
<dbReference type="InterPro" id="IPR036769">
    <property type="entry name" value="Ribosomal_uL11_C_sf"/>
</dbReference>
<dbReference type="InterPro" id="IPR020784">
    <property type="entry name" value="Ribosomal_uL11_N"/>
</dbReference>
<dbReference type="InterPro" id="IPR036796">
    <property type="entry name" value="Ribosomal_uL11_N_sf"/>
</dbReference>
<dbReference type="NCBIfam" id="TIGR01632">
    <property type="entry name" value="L11_bact"/>
    <property type="match status" value="1"/>
</dbReference>
<dbReference type="PANTHER" id="PTHR11661">
    <property type="entry name" value="60S RIBOSOMAL PROTEIN L12"/>
    <property type="match status" value="1"/>
</dbReference>
<dbReference type="PANTHER" id="PTHR11661:SF1">
    <property type="entry name" value="LARGE RIBOSOMAL SUBUNIT PROTEIN UL11M"/>
    <property type="match status" value="1"/>
</dbReference>
<dbReference type="Pfam" id="PF00298">
    <property type="entry name" value="Ribosomal_L11"/>
    <property type="match status" value="1"/>
</dbReference>
<dbReference type="Pfam" id="PF03946">
    <property type="entry name" value="Ribosomal_L11_N"/>
    <property type="match status" value="1"/>
</dbReference>
<dbReference type="SMART" id="SM00649">
    <property type="entry name" value="RL11"/>
    <property type="match status" value="1"/>
</dbReference>
<dbReference type="SUPFAM" id="SSF54747">
    <property type="entry name" value="Ribosomal L11/L12e N-terminal domain"/>
    <property type="match status" value="1"/>
</dbReference>
<dbReference type="SUPFAM" id="SSF46906">
    <property type="entry name" value="Ribosomal protein L11, C-terminal domain"/>
    <property type="match status" value="1"/>
</dbReference>
<evidence type="ECO:0000255" key="1">
    <source>
        <dbReference type="HAMAP-Rule" id="MF_00736"/>
    </source>
</evidence>
<evidence type="ECO:0000305" key="2"/>
<organism>
    <name type="scientific">Dichelobacter nodosus (strain VCS1703A)</name>
    <dbReference type="NCBI Taxonomy" id="246195"/>
    <lineage>
        <taxon>Bacteria</taxon>
        <taxon>Pseudomonadati</taxon>
        <taxon>Pseudomonadota</taxon>
        <taxon>Gammaproteobacteria</taxon>
        <taxon>Cardiobacteriales</taxon>
        <taxon>Cardiobacteriaceae</taxon>
        <taxon>Dichelobacter</taxon>
    </lineage>
</organism>
<comment type="function">
    <text evidence="1">Forms part of the ribosomal stalk which helps the ribosome interact with GTP-bound translation factors.</text>
</comment>
<comment type="subunit">
    <text evidence="1">Part of the ribosomal stalk of the 50S ribosomal subunit. Interacts with L10 and the large rRNA to form the base of the stalk. L10 forms an elongated spine to which L12 dimers bind in a sequential fashion forming a multimeric L10(L12)X complex.</text>
</comment>
<comment type="PTM">
    <text evidence="1">One or more lysine residues are methylated.</text>
</comment>
<comment type="similarity">
    <text evidence="1">Belongs to the universal ribosomal protein uL11 family.</text>
</comment>
<sequence>MAKKITGYIKLQIPAGKANPSPPVGPALGQHGVNIMEFCKAFNAETQSLEAGMPIPVVITVYSDRSFTFVKKTPPAAFLLKKAAGIKSGSGKPNTQKVGKVTRKQLEEIVAMKKADLTAADIEAGVRTIAGSARAMGLTVEE</sequence>
<protein>
    <recommendedName>
        <fullName evidence="1">Large ribosomal subunit protein uL11</fullName>
    </recommendedName>
    <alternativeName>
        <fullName evidence="2">50S ribosomal protein L11</fullName>
    </alternativeName>
</protein>
<keyword id="KW-0488">Methylation</keyword>
<keyword id="KW-1185">Reference proteome</keyword>
<keyword id="KW-0687">Ribonucleoprotein</keyword>
<keyword id="KW-0689">Ribosomal protein</keyword>
<keyword id="KW-0694">RNA-binding</keyword>
<keyword id="KW-0699">rRNA-binding</keyword>
<feature type="chain" id="PRO_1000046174" description="Large ribosomal subunit protein uL11">
    <location>
        <begin position="1"/>
        <end position="142"/>
    </location>
</feature>
<reference key="1">
    <citation type="journal article" date="2007" name="Nat. Biotechnol.">
        <title>Genome sequence and identification of candidate vaccine antigens from the animal pathogen Dichelobacter nodosus.</title>
        <authorList>
            <person name="Myers G.S.A."/>
            <person name="Parker D."/>
            <person name="Al-Hasani K."/>
            <person name="Kennan R.M."/>
            <person name="Seemann T."/>
            <person name="Ren Q."/>
            <person name="Badger J.H."/>
            <person name="Selengut J.D."/>
            <person name="Deboy R.T."/>
            <person name="Tettelin H."/>
            <person name="Boyce J.D."/>
            <person name="McCarl V.P."/>
            <person name="Han X."/>
            <person name="Nelson W.C."/>
            <person name="Madupu R."/>
            <person name="Mohamoud Y."/>
            <person name="Holley T."/>
            <person name="Fedorova N."/>
            <person name="Khouri H."/>
            <person name="Bottomley S.P."/>
            <person name="Whittington R.J."/>
            <person name="Adler B."/>
            <person name="Songer J.G."/>
            <person name="Rood J.I."/>
            <person name="Paulsen I.T."/>
        </authorList>
    </citation>
    <scope>NUCLEOTIDE SEQUENCE [LARGE SCALE GENOMIC DNA]</scope>
    <source>
        <strain>VCS1703A</strain>
    </source>
</reference>
<accession>A5EX74</accession>